<reference key="1">
    <citation type="journal article" date="2011" name="J. Bacteriol.">
        <title>Complete genome sequence of the metabolically versatile plant growth-promoting endophyte, Variovorax paradoxus S110.</title>
        <authorList>
            <person name="Han J.I."/>
            <person name="Choi H.K."/>
            <person name="Lee S.W."/>
            <person name="Orwin P.M."/>
            <person name="Kim J."/>
            <person name="Laroe S.L."/>
            <person name="Kim T.G."/>
            <person name="O'Neil J."/>
            <person name="Leadbetter J.R."/>
            <person name="Lee S.Y."/>
            <person name="Hur C.G."/>
            <person name="Spain J.C."/>
            <person name="Ovchinnikova G."/>
            <person name="Goodwin L."/>
            <person name="Han C."/>
        </authorList>
    </citation>
    <scope>NUCLEOTIDE SEQUENCE [LARGE SCALE GENOMIC DNA]</scope>
    <source>
        <strain>S110</strain>
    </source>
</reference>
<comment type="function">
    <text evidence="1">Protease subunit of a proteasome-like degradation complex believed to be a general protein degrading machinery.</text>
</comment>
<comment type="catalytic activity">
    <reaction evidence="1">
        <text>ATP-dependent cleavage of peptide bonds with broad specificity.</text>
        <dbReference type="EC" id="3.4.25.2"/>
    </reaction>
</comment>
<comment type="activity regulation">
    <text evidence="1">Allosterically activated by HslU binding.</text>
</comment>
<comment type="subunit">
    <text evidence="1">A double ring-shaped homohexamer of HslV is capped on each side by a ring-shaped HslU homohexamer. The assembly of the HslU/HslV complex is dependent on binding of ATP.</text>
</comment>
<comment type="subcellular location">
    <subcellularLocation>
        <location evidence="1">Cytoplasm</location>
    </subcellularLocation>
</comment>
<comment type="similarity">
    <text evidence="1">Belongs to the peptidase T1B family. HslV subfamily.</text>
</comment>
<protein>
    <recommendedName>
        <fullName evidence="1">ATP-dependent protease subunit HslV</fullName>
        <ecNumber evidence="1">3.4.25.2</ecNumber>
    </recommendedName>
</protein>
<feature type="chain" id="PRO_1000204517" description="ATP-dependent protease subunit HslV">
    <location>
        <begin position="1"/>
        <end position="181"/>
    </location>
</feature>
<feature type="active site" evidence="1">
    <location>
        <position position="7"/>
    </location>
</feature>
<feature type="binding site" evidence="1">
    <location>
        <position position="166"/>
    </location>
    <ligand>
        <name>Na(+)</name>
        <dbReference type="ChEBI" id="CHEBI:29101"/>
    </ligand>
</feature>
<feature type="binding site" evidence="1">
    <location>
        <position position="169"/>
    </location>
    <ligand>
        <name>Na(+)</name>
        <dbReference type="ChEBI" id="CHEBI:29101"/>
    </ligand>
</feature>
<feature type="binding site" evidence="1">
    <location>
        <position position="172"/>
    </location>
    <ligand>
        <name>Na(+)</name>
        <dbReference type="ChEBI" id="CHEBI:29101"/>
    </ligand>
</feature>
<gene>
    <name evidence="1" type="primary">hslV</name>
    <name type="ordered locus">Vapar_0908</name>
</gene>
<evidence type="ECO:0000255" key="1">
    <source>
        <dbReference type="HAMAP-Rule" id="MF_00248"/>
    </source>
</evidence>
<name>HSLV_VARPS</name>
<keyword id="KW-0021">Allosteric enzyme</keyword>
<keyword id="KW-0963">Cytoplasm</keyword>
<keyword id="KW-0378">Hydrolase</keyword>
<keyword id="KW-0479">Metal-binding</keyword>
<keyword id="KW-0645">Protease</keyword>
<keyword id="KW-0915">Sodium</keyword>
<keyword id="KW-0888">Threonine protease</keyword>
<proteinExistence type="inferred from homology"/>
<sequence>MEQFHGTTIVSVRRKTPQGDQVAIGGDGQVTLGNIVIKGTARKVRRLYHGKVLAGFAGATADAFTLFERFEAKLEKHQGHLTRAAVELTKDWRTDRVLRKLEAMLAVADATTSLIITGNGDVLEPEDGVIAIGSGGAYAQSAAKALIDNTELTAEQIVRKSLAIAGEICIYTNMNHTVEAL</sequence>
<dbReference type="EC" id="3.4.25.2" evidence="1"/>
<dbReference type="EMBL" id="CP001635">
    <property type="protein sequence ID" value="ACS17559.1"/>
    <property type="molecule type" value="Genomic_DNA"/>
</dbReference>
<dbReference type="SMR" id="C5CNE3"/>
<dbReference type="STRING" id="543728.Vapar_0908"/>
<dbReference type="KEGG" id="vap:Vapar_0908"/>
<dbReference type="eggNOG" id="COG5405">
    <property type="taxonomic scope" value="Bacteria"/>
</dbReference>
<dbReference type="HOGENOM" id="CLU_093872_1_0_4"/>
<dbReference type="OrthoDB" id="9804884at2"/>
<dbReference type="GO" id="GO:0009376">
    <property type="term" value="C:HslUV protease complex"/>
    <property type="evidence" value="ECO:0007669"/>
    <property type="project" value="UniProtKB-UniRule"/>
</dbReference>
<dbReference type="GO" id="GO:0005839">
    <property type="term" value="C:proteasome core complex"/>
    <property type="evidence" value="ECO:0007669"/>
    <property type="project" value="InterPro"/>
</dbReference>
<dbReference type="GO" id="GO:0046872">
    <property type="term" value="F:metal ion binding"/>
    <property type="evidence" value="ECO:0007669"/>
    <property type="project" value="UniProtKB-KW"/>
</dbReference>
<dbReference type="GO" id="GO:0004298">
    <property type="term" value="F:threonine-type endopeptidase activity"/>
    <property type="evidence" value="ECO:0007669"/>
    <property type="project" value="UniProtKB-KW"/>
</dbReference>
<dbReference type="GO" id="GO:0051603">
    <property type="term" value="P:proteolysis involved in protein catabolic process"/>
    <property type="evidence" value="ECO:0007669"/>
    <property type="project" value="InterPro"/>
</dbReference>
<dbReference type="CDD" id="cd01913">
    <property type="entry name" value="protease_HslV"/>
    <property type="match status" value="1"/>
</dbReference>
<dbReference type="FunFam" id="3.60.20.10:FF:000002">
    <property type="entry name" value="ATP-dependent protease subunit HslV"/>
    <property type="match status" value="1"/>
</dbReference>
<dbReference type="Gene3D" id="3.60.20.10">
    <property type="entry name" value="Glutamine Phosphoribosylpyrophosphate, subunit 1, domain 1"/>
    <property type="match status" value="1"/>
</dbReference>
<dbReference type="HAMAP" id="MF_00248">
    <property type="entry name" value="HslV"/>
    <property type="match status" value="1"/>
</dbReference>
<dbReference type="InterPro" id="IPR022281">
    <property type="entry name" value="ATP-dep_Prtase_HsIV_su"/>
</dbReference>
<dbReference type="InterPro" id="IPR029055">
    <property type="entry name" value="Ntn_hydrolases_N"/>
</dbReference>
<dbReference type="InterPro" id="IPR001353">
    <property type="entry name" value="Proteasome_sua/b"/>
</dbReference>
<dbReference type="InterPro" id="IPR023333">
    <property type="entry name" value="Proteasome_suB-type"/>
</dbReference>
<dbReference type="NCBIfam" id="TIGR03692">
    <property type="entry name" value="ATP_dep_HslV"/>
    <property type="match status" value="1"/>
</dbReference>
<dbReference type="NCBIfam" id="NF003964">
    <property type="entry name" value="PRK05456.1"/>
    <property type="match status" value="1"/>
</dbReference>
<dbReference type="PANTHER" id="PTHR32194:SF0">
    <property type="entry name" value="ATP-DEPENDENT PROTEASE SUBUNIT HSLV"/>
    <property type="match status" value="1"/>
</dbReference>
<dbReference type="PANTHER" id="PTHR32194">
    <property type="entry name" value="METALLOPROTEASE TLDD"/>
    <property type="match status" value="1"/>
</dbReference>
<dbReference type="Pfam" id="PF00227">
    <property type="entry name" value="Proteasome"/>
    <property type="match status" value="1"/>
</dbReference>
<dbReference type="PIRSF" id="PIRSF039093">
    <property type="entry name" value="HslV"/>
    <property type="match status" value="1"/>
</dbReference>
<dbReference type="SUPFAM" id="SSF56235">
    <property type="entry name" value="N-terminal nucleophile aminohydrolases (Ntn hydrolases)"/>
    <property type="match status" value="1"/>
</dbReference>
<dbReference type="PROSITE" id="PS51476">
    <property type="entry name" value="PROTEASOME_BETA_2"/>
    <property type="match status" value="1"/>
</dbReference>
<accession>C5CNE3</accession>
<organism>
    <name type="scientific">Variovorax paradoxus (strain S110)</name>
    <dbReference type="NCBI Taxonomy" id="543728"/>
    <lineage>
        <taxon>Bacteria</taxon>
        <taxon>Pseudomonadati</taxon>
        <taxon>Pseudomonadota</taxon>
        <taxon>Betaproteobacteria</taxon>
        <taxon>Burkholderiales</taxon>
        <taxon>Comamonadaceae</taxon>
        <taxon>Variovorax</taxon>
    </lineage>
</organism>